<organism>
    <name type="scientific">Bacillus velezensis (strain DSM 23117 / BGSC 10A6 / LMG 26770 / FZB42)</name>
    <name type="common">Bacillus amyloliquefaciens subsp. plantarum</name>
    <dbReference type="NCBI Taxonomy" id="326423"/>
    <lineage>
        <taxon>Bacteria</taxon>
        <taxon>Bacillati</taxon>
        <taxon>Bacillota</taxon>
        <taxon>Bacilli</taxon>
        <taxon>Bacillales</taxon>
        <taxon>Bacillaceae</taxon>
        <taxon>Bacillus</taxon>
        <taxon>Bacillus amyloliquefaciens group</taxon>
    </lineage>
</organism>
<accession>A7Z323</accession>
<protein>
    <recommendedName>
        <fullName evidence="1">Uroporphyrinogen decarboxylase</fullName>
        <shortName evidence="1">UPD</shortName>
        <shortName evidence="1">URO-D</shortName>
        <ecNumber evidence="1">4.1.1.37</ecNumber>
    </recommendedName>
</protein>
<feature type="chain" id="PRO_0000325625" description="Uroporphyrinogen decarboxylase">
    <location>
        <begin position="1"/>
        <end position="353"/>
    </location>
</feature>
<feature type="binding site" evidence="1">
    <location>
        <begin position="29"/>
        <end position="33"/>
    </location>
    <ligand>
        <name>substrate</name>
    </ligand>
</feature>
<feature type="binding site" evidence="1">
    <location>
        <position position="78"/>
    </location>
    <ligand>
        <name>substrate</name>
    </ligand>
</feature>
<feature type="binding site" evidence="1">
    <location>
        <position position="154"/>
    </location>
    <ligand>
        <name>substrate</name>
    </ligand>
</feature>
<feature type="binding site" evidence="1">
    <location>
        <position position="209"/>
    </location>
    <ligand>
        <name>substrate</name>
    </ligand>
</feature>
<feature type="binding site" evidence="1">
    <location>
        <position position="322"/>
    </location>
    <ligand>
        <name>substrate</name>
    </ligand>
</feature>
<feature type="site" description="Transition state stabilizer" evidence="1">
    <location>
        <position position="78"/>
    </location>
</feature>
<dbReference type="EC" id="4.1.1.37" evidence="1"/>
<dbReference type="EMBL" id="CP000560">
    <property type="protein sequence ID" value="ABS73399.1"/>
    <property type="molecule type" value="Genomic_DNA"/>
</dbReference>
<dbReference type="RefSeq" id="WP_012117216.1">
    <property type="nucleotide sequence ID" value="NC_009725.2"/>
</dbReference>
<dbReference type="SMR" id="A7Z323"/>
<dbReference type="GeneID" id="93080172"/>
<dbReference type="KEGG" id="bay:RBAM_010350"/>
<dbReference type="HOGENOM" id="CLU_040933_0_1_9"/>
<dbReference type="UniPathway" id="UPA00251">
    <property type="reaction ID" value="UER00321"/>
</dbReference>
<dbReference type="Proteomes" id="UP000001120">
    <property type="component" value="Chromosome"/>
</dbReference>
<dbReference type="GO" id="GO:0005829">
    <property type="term" value="C:cytosol"/>
    <property type="evidence" value="ECO:0007669"/>
    <property type="project" value="TreeGrafter"/>
</dbReference>
<dbReference type="GO" id="GO:0004853">
    <property type="term" value="F:uroporphyrinogen decarboxylase activity"/>
    <property type="evidence" value="ECO:0007669"/>
    <property type="project" value="UniProtKB-UniRule"/>
</dbReference>
<dbReference type="GO" id="GO:0006782">
    <property type="term" value="P:protoporphyrinogen IX biosynthetic process"/>
    <property type="evidence" value="ECO:0007669"/>
    <property type="project" value="UniProtKB-UniRule"/>
</dbReference>
<dbReference type="CDD" id="cd00717">
    <property type="entry name" value="URO-D"/>
    <property type="match status" value="1"/>
</dbReference>
<dbReference type="FunFam" id="3.20.20.210:FF:000005">
    <property type="entry name" value="Uroporphyrinogen decarboxylase"/>
    <property type="match status" value="1"/>
</dbReference>
<dbReference type="Gene3D" id="3.20.20.210">
    <property type="match status" value="1"/>
</dbReference>
<dbReference type="HAMAP" id="MF_00218">
    <property type="entry name" value="URO_D"/>
    <property type="match status" value="1"/>
</dbReference>
<dbReference type="InterPro" id="IPR038071">
    <property type="entry name" value="UROD/MetE-like_sf"/>
</dbReference>
<dbReference type="InterPro" id="IPR006361">
    <property type="entry name" value="Uroporphyrinogen_deCO2ase_HemE"/>
</dbReference>
<dbReference type="InterPro" id="IPR000257">
    <property type="entry name" value="Uroporphyrinogen_deCOase"/>
</dbReference>
<dbReference type="NCBIfam" id="TIGR01464">
    <property type="entry name" value="hemE"/>
    <property type="match status" value="1"/>
</dbReference>
<dbReference type="PANTHER" id="PTHR21091">
    <property type="entry name" value="METHYLTETRAHYDROFOLATE:HOMOCYSTEINE METHYLTRANSFERASE RELATED"/>
    <property type="match status" value="1"/>
</dbReference>
<dbReference type="PANTHER" id="PTHR21091:SF169">
    <property type="entry name" value="UROPORPHYRINOGEN DECARBOXYLASE"/>
    <property type="match status" value="1"/>
</dbReference>
<dbReference type="Pfam" id="PF01208">
    <property type="entry name" value="URO-D"/>
    <property type="match status" value="1"/>
</dbReference>
<dbReference type="SUPFAM" id="SSF51726">
    <property type="entry name" value="UROD/MetE-like"/>
    <property type="match status" value="1"/>
</dbReference>
<dbReference type="PROSITE" id="PS00906">
    <property type="entry name" value="UROD_1"/>
    <property type="match status" value="1"/>
</dbReference>
<dbReference type="PROSITE" id="PS00907">
    <property type="entry name" value="UROD_2"/>
    <property type="match status" value="1"/>
</dbReference>
<name>DCUP_BACVZ</name>
<proteinExistence type="inferred from homology"/>
<evidence type="ECO:0000255" key="1">
    <source>
        <dbReference type="HAMAP-Rule" id="MF_00218"/>
    </source>
</evidence>
<gene>
    <name evidence="1" type="primary">hemE</name>
    <name type="ordered locus">RBAM_010350</name>
</gene>
<comment type="function">
    <text evidence="1">Catalyzes the decarboxylation of four acetate groups of uroporphyrinogen-III to yield coproporphyrinogen-III.</text>
</comment>
<comment type="catalytic activity">
    <reaction evidence="1">
        <text>uroporphyrinogen III + 4 H(+) = coproporphyrinogen III + 4 CO2</text>
        <dbReference type="Rhea" id="RHEA:19865"/>
        <dbReference type="ChEBI" id="CHEBI:15378"/>
        <dbReference type="ChEBI" id="CHEBI:16526"/>
        <dbReference type="ChEBI" id="CHEBI:57308"/>
        <dbReference type="ChEBI" id="CHEBI:57309"/>
        <dbReference type="EC" id="4.1.1.37"/>
    </reaction>
</comment>
<comment type="pathway">
    <text evidence="1">Porphyrin-containing compound metabolism; protoporphyrin-IX biosynthesis; coproporphyrinogen-III from 5-aminolevulinate: step 4/4.</text>
</comment>
<comment type="subunit">
    <text evidence="1">Homodimer.</text>
</comment>
<comment type="subcellular location">
    <subcellularLocation>
        <location evidence="1">Cytoplasm</location>
    </subcellularLocation>
</comment>
<comment type="similarity">
    <text evidence="1">Belongs to the uroporphyrinogen decarboxylase family.</text>
</comment>
<keyword id="KW-0963">Cytoplasm</keyword>
<keyword id="KW-0210">Decarboxylase</keyword>
<keyword id="KW-0456">Lyase</keyword>
<keyword id="KW-0627">Porphyrin biosynthesis</keyword>
<sequence>MSKREAFNDTFLKAARGEKTNHVPVWYMRQAGRSQPEYRKLKEKYGLVEITHQPELCAYVTRLPVEQYGVDAAILYKDIMTPLPYIGVDVEIKNGIGPVIDQPVRSAADIEKLGELNPEQDVPYVLETIRLLVNEQLNVPLIGFSGAPFTLASYMIEGGPSKNYNKTKAFMHSMPQAWKMLMDKLADMIIVYAKAQINAGAKAIQIFDSWVGALNREDYRQFIKPVMDRIFRELSAEQVPLIMFGVGASHLAGDWHDLPLDVVGLDWRLGIDDARKQGITKTVQGNLDPSLLLAPWEVIEKKAKAILDQGMKTDGFIFNLGHGVFPDVNPETLKKLTAFVHEYSAAKKTEQSS</sequence>
<reference key="1">
    <citation type="journal article" date="2007" name="Nat. Biotechnol.">
        <title>Comparative analysis of the complete genome sequence of the plant growth-promoting bacterium Bacillus amyloliquefaciens FZB42.</title>
        <authorList>
            <person name="Chen X.H."/>
            <person name="Koumoutsi A."/>
            <person name="Scholz R."/>
            <person name="Eisenreich A."/>
            <person name="Schneider K."/>
            <person name="Heinemeyer I."/>
            <person name="Morgenstern B."/>
            <person name="Voss B."/>
            <person name="Hess W.R."/>
            <person name="Reva O."/>
            <person name="Junge H."/>
            <person name="Voigt B."/>
            <person name="Jungblut P.R."/>
            <person name="Vater J."/>
            <person name="Suessmuth R."/>
            <person name="Liesegang H."/>
            <person name="Strittmatter A."/>
            <person name="Gottschalk G."/>
            <person name="Borriss R."/>
        </authorList>
    </citation>
    <scope>NUCLEOTIDE SEQUENCE [LARGE SCALE GENOMIC DNA]</scope>
    <source>
        <strain>DSM 23117 / BGSC 10A6 / LMG 26770 / FZB42</strain>
    </source>
</reference>